<protein>
    <recommendedName>
        <fullName>Transthyretin-like protein 2</fullName>
    </recommendedName>
</protein>
<comment type="subcellular location">
    <subcellularLocation>
        <location evidence="3">Secreted</location>
    </subcellularLocation>
</comment>
<comment type="similarity">
    <text evidence="3">Belongs to the nematode transthyretin-like family.</text>
</comment>
<organism>
    <name type="scientific">Caenorhabditis elegans</name>
    <dbReference type="NCBI Taxonomy" id="6239"/>
    <lineage>
        <taxon>Eukaryota</taxon>
        <taxon>Metazoa</taxon>
        <taxon>Ecdysozoa</taxon>
        <taxon>Nematoda</taxon>
        <taxon>Chromadorea</taxon>
        <taxon>Rhabditida</taxon>
        <taxon>Rhabditina</taxon>
        <taxon>Rhabditomorpha</taxon>
        <taxon>Rhabditoidea</taxon>
        <taxon>Rhabditidae</taxon>
        <taxon>Peloderinae</taxon>
        <taxon>Caenorhabditis</taxon>
    </lineage>
</organism>
<reference key="1">
    <citation type="journal article" date="1994" name="Nature">
        <title>2.2 Mb of contiguous nucleotide sequence from chromosome III of C. elegans.</title>
        <authorList>
            <person name="Wilson R."/>
            <person name="Ainscough R."/>
            <person name="Anderson K."/>
            <person name="Baynes C."/>
            <person name="Berks M."/>
            <person name="Bonfield J."/>
            <person name="Burton J."/>
            <person name="Connell M."/>
            <person name="Copsey T."/>
            <person name="Cooper J."/>
            <person name="Coulson A."/>
            <person name="Craxton M."/>
            <person name="Dear S."/>
            <person name="Du Z."/>
            <person name="Durbin R."/>
            <person name="Favello A."/>
            <person name="Fraser A."/>
            <person name="Fulton L."/>
            <person name="Gardner A."/>
            <person name="Green P."/>
            <person name="Hawkins T."/>
            <person name="Hillier L."/>
            <person name="Jier M."/>
            <person name="Johnston L."/>
            <person name="Jones M."/>
            <person name="Kershaw J."/>
            <person name="Kirsten J."/>
            <person name="Laisster N."/>
            <person name="Latreille P."/>
            <person name="Lightning J."/>
            <person name="Lloyd C."/>
            <person name="Mortimore B."/>
            <person name="O'Callaghan M."/>
            <person name="Parsons J."/>
            <person name="Percy C."/>
            <person name="Rifken L."/>
            <person name="Roopra A."/>
            <person name="Saunders D."/>
            <person name="Shownkeen R."/>
            <person name="Sims M."/>
            <person name="Smaldon N."/>
            <person name="Smith A."/>
            <person name="Smith M."/>
            <person name="Sonnhammer E."/>
            <person name="Staden R."/>
            <person name="Sulston J."/>
            <person name="Thierry-Mieg J."/>
            <person name="Thomas K."/>
            <person name="Vaudin M."/>
            <person name="Vaughan K."/>
            <person name="Waterston R."/>
            <person name="Watson A."/>
            <person name="Weinstock L."/>
            <person name="Wilkinson-Sproat J."/>
            <person name="Wohldman P."/>
        </authorList>
    </citation>
    <scope>NUCLEOTIDE SEQUENCE [LARGE SCALE GENOMIC DNA]</scope>
    <source>
        <strain>Bristol N2</strain>
    </source>
</reference>
<reference key="2">
    <citation type="journal article" date="1998" name="Science">
        <title>Genome sequence of the nematode C. elegans: a platform for investigating biology.</title>
        <authorList>
            <consortium name="The C. elegans sequencing consortium"/>
        </authorList>
    </citation>
    <scope>NUCLEOTIDE SEQUENCE [LARGE SCALE GENOMIC DNA]</scope>
    <source>
        <strain>Bristol N2</strain>
    </source>
</reference>
<reference key="3">
    <citation type="journal article" date="2007" name="Mol. Cell. Proteomics">
        <title>Proteomics reveals N-linked glycoprotein diversity in Caenorhabditis elegans and suggests an atypical translocation mechanism for integral membrane proteins.</title>
        <authorList>
            <person name="Kaji H."/>
            <person name="Kamiie J."/>
            <person name="Kawakami H."/>
            <person name="Kido K."/>
            <person name="Yamauchi Y."/>
            <person name="Shinkawa T."/>
            <person name="Taoka M."/>
            <person name="Takahashi N."/>
            <person name="Isobe T."/>
        </authorList>
    </citation>
    <scope>GLYCOSYLATION [LARGE SCALE ANALYSIS] AT ASN-77</scope>
    <scope>IDENTIFICATION BY MASS SPECTROMETRY</scope>
    <source>
        <strain>Bristol N2</strain>
    </source>
</reference>
<proteinExistence type="evidence at protein level"/>
<keyword id="KW-0325">Glycoprotein</keyword>
<keyword id="KW-1185">Reference proteome</keyword>
<keyword id="KW-0964">Secreted</keyword>
<keyword id="KW-0732">Signal</keyword>
<accession>P34500</accession>
<gene>
    <name type="primary">ttr-2</name>
    <name type="ORF">K03H1.4</name>
</gene>
<feature type="signal peptide" evidence="1">
    <location>
        <begin position="1"/>
        <end position="17"/>
    </location>
</feature>
<feature type="chain" id="PRO_0000036252" description="Transthyretin-like protein 2">
    <location>
        <begin position="18"/>
        <end position="148"/>
    </location>
</feature>
<feature type="glycosylation site" description="N-linked (GlcNAc...) asparagine" evidence="2">
    <location>
        <position position="77"/>
    </location>
</feature>
<dbReference type="EMBL" id="Z29560">
    <property type="protein sequence ID" value="CAA82657.1"/>
    <property type="molecule type" value="Genomic_DNA"/>
</dbReference>
<dbReference type="PIR" id="S41027">
    <property type="entry name" value="S41027"/>
</dbReference>
<dbReference type="RefSeq" id="NP_499203.1">
    <property type="nucleotide sequence ID" value="NM_066802.7"/>
</dbReference>
<dbReference type="SMR" id="P34500"/>
<dbReference type="BioGRID" id="41597">
    <property type="interactions" value="6"/>
</dbReference>
<dbReference type="FunCoup" id="P34500">
    <property type="interactions" value="1156"/>
</dbReference>
<dbReference type="STRING" id="6239.K03H1.4.2"/>
<dbReference type="GlyCosmos" id="P34500">
    <property type="glycosylation" value="1 site, No reported glycans"/>
</dbReference>
<dbReference type="iPTMnet" id="P34500"/>
<dbReference type="PaxDb" id="6239-K03H1.4.2"/>
<dbReference type="PeptideAtlas" id="P34500"/>
<dbReference type="EnsemblMetazoa" id="K03H1.4.1">
    <property type="protein sequence ID" value="K03H1.4.1"/>
    <property type="gene ID" value="WBGene00010539"/>
</dbReference>
<dbReference type="GeneID" id="176403"/>
<dbReference type="KEGG" id="cel:CELE_K03H1.4"/>
<dbReference type="AGR" id="WB:WBGene00010539"/>
<dbReference type="CTD" id="176403"/>
<dbReference type="WormBase" id="K03H1.4">
    <property type="protein sequence ID" value="CE00475"/>
    <property type="gene ID" value="WBGene00010539"/>
    <property type="gene designation" value="ttr-2"/>
</dbReference>
<dbReference type="eggNOG" id="ENOG502S1IK">
    <property type="taxonomic scope" value="Eukaryota"/>
</dbReference>
<dbReference type="GeneTree" id="ENSGT00970000196570"/>
<dbReference type="HOGENOM" id="CLU_121109_4_1_1"/>
<dbReference type="InParanoid" id="P34500"/>
<dbReference type="OMA" id="PCQRVFR"/>
<dbReference type="OrthoDB" id="5837678at2759"/>
<dbReference type="PhylomeDB" id="P34500"/>
<dbReference type="PRO" id="PR:P34500"/>
<dbReference type="Proteomes" id="UP000001940">
    <property type="component" value="Chromosome III"/>
</dbReference>
<dbReference type="Bgee" id="WBGene00010539">
    <property type="expression patterns" value="Expressed in adult organism and 4 other cell types or tissues"/>
</dbReference>
<dbReference type="GO" id="GO:0009986">
    <property type="term" value="C:cell surface"/>
    <property type="evidence" value="ECO:0007669"/>
    <property type="project" value="InterPro"/>
</dbReference>
<dbReference type="GO" id="GO:0005576">
    <property type="term" value="C:extracellular region"/>
    <property type="evidence" value="ECO:0007669"/>
    <property type="project" value="UniProtKB-SubCell"/>
</dbReference>
<dbReference type="Gene3D" id="2.60.40.3330">
    <property type="match status" value="1"/>
</dbReference>
<dbReference type="InterPro" id="IPR001534">
    <property type="entry name" value="Transthyretin-like"/>
</dbReference>
<dbReference type="InterPro" id="IPR038479">
    <property type="entry name" value="Transthyretin-like_sf"/>
</dbReference>
<dbReference type="PANTHER" id="PTHR21700">
    <property type="entry name" value="TRANSTHYRETIN-LIKE FAMILY PROTEIN-RELATED"/>
    <property type="match status" value="1"/>
</dbReference>
<dbReference type="PANTHER" id="PTHR21700:SF22">
    <property type="entry name" value="TRANSTHYRETIN-LIKE PROTEIN 2"/>
    <property type="match status" value="1"/>
</dbReference>
<dbReference type="Pfam" id="PF01060">
    <property type="entry name" value="TTR-52"/>
    <property type="match status" value="1"/>
</dbReference>
<name>TTR2_CAEEL</name>
<evidence type="ECO:0000255" key="1"/>
<evidence type="ECO:0000269" key="2">
    <source>
    </source>
</evidence>
<evidence type="ECO:0000305" key="3"/>
<sequence>MSKYAILGLVLVGTVASLDFIGRTQSAAIKGRLVCEGKPASGVKVKLMESDNSFGPGFLDSDDKMASGKADSHGEFNLSGSTKEITGIEPYLVVFHDCKDGITPCQRVFRVNVPKSYTNSGSSAKKTYDAGVIELAGKYPGETRSCLN</sequence>